<sequence>MEQGKGLAVLILAIILLQGTLAQSIKGNHLVKVYDYQEDGSVLLTCDAEAKNITWFKDGKMIGFLTEDKKKWNLGSNAKDPRGMYQCKGSQNKSKPLQVYYRMCQNCIELNAATISGFLFAEIVSIFVLAVGVYFIAGQDGVRQSRASDKQTLLPNDQLYQPLKDREDDQYSHLQGNQLRRN</sequence>
<comment type="function">
    <text evidence="8 11 12">Part of the TCR-CD3 complex present on T-lymphocyte cell surface that plays an essential role in adaptive immune response. When antigen presenting cells (APCs) activate T-cell receptor (TCR), TCR-mediated signals are transmitted across the cell membrane by the CD3 chains CD3D, CD3E, CD3G and CD3Z. All CD3 chains contain immunoreceptor tyrosine-based activation motifs (ITAMs) in their cytoplasmic domain. Upon TCR engagement, these motifs become phosphorylated by Src family protein tyrosine kinases LCK and FYN, resulting in the activation of downstream signaling pathways (PubMed:2470098). In addition to this role of signal transduction in T-cell activation, CD3G plays an essential role in the dynamic regulation of TCR expression at the cell surface (PubMed:8187769). Indeed, constitutive TCR cycling is dependent on the di-leucine-based (diL) receptor-sorting motif present in CD3G.</text>
</comment>
<comment type="subunit">
    <text evidence="4">The TCR-CD3 complex is composed of a CD3D/CD3E and a CD3G/CD3E heterodimers that preferentially associate with TCRalpha and TCRbeta, respectively, to form TCRalpha/CD3E/CD3G and TCRbeta/CD3G/CD3E trimers. In turn, the hexamer interacts with CD3Z homodimer to form the TCR-CD3 complex. Alternatively, TCRalpha and TCRbeta can be replaced by TCRgamma and TCRdelta.</text>
</comment>
<comment type="interaction">
    <interactant intactId="EBI-3862428">
        <id>P09693</id>
    </interactant>
    <interactant intactId="EBI-4319440">
        <id>P54849</id>
        <label>EMP1</label>
    </interactant>
    <organismsDiffer>false</organismsDiffer>
    <experiments>3</experiments>
</comment>
<comment type="interaction">
    <interactant intactId="EBI-3862428">
        <id>P09693</id>
    </interactant>
    <interactant intactId="EBI-12007212">
        <id>Q86UP2-3</id>
        <label>KTN1</label>
    </interactant>
    <organismsDiffer>false</organismsDiffer>
    <experiments>3</experiments>
</comment>
<comment type="interaction">
    <interactant intactId="EBI-3862428">
        <id>P09693</id>
    </interactant>
    <interactant intactId="EBI-8070286">
        <id>O43561-2</id>
        <label>LAT</label>
    </interactant>
    <organismsDiffer>false</organismsDiffer>
    <experiments>3</experiments>
</comment>
<comment type="interaction">
    <interactant intactId="EBI-3862428">
        <id>P09693</id>
    </interactant>
    <interactant intactId="EBI-3932027">
        <id>P21145</id>
        <label>MAL</label>
    </interactant>
    <organismsDiffer>false</organismsDiffer>
    <experiments>3</experiments>
</comment>
<comment type="interaction">
    <interactant intactId="EBI-3862428">
        <id>P09693</id>
    </interactant>
    <interactant intactId="EBI-2845982">
        <id>Q01453</id>
        <label>PMP22</label>
    </interactant>
    <organismsDiffer>false</organismsDiffer>
    <experiments>3</experiments>
</comment>
<comment type="interaction">
    <interactant intactId="EBI-3862428">
        <id>P09693</id>
    </interactant>
    <interactant intactId="EBI-741829">
        <id>Q96HH6</id>
        <label>TMEM19</label>
    </interactant>
    <organismsDiffer>false</organismsDiffer>
    <experiments>3</experiments>
</comment>
<comment type="interaction">
    <interactant intactId="EBI-3862428">
        <id>P09693</id>
    </interactant>
    <interactant intactId="EBI-12274070">
        <id>Q969S6</id>
        <label>TMEM203</label>
    </interactant>
    <organismsDiffer>false</organismsDiffer>
    <experiments>3</experiments>
</comment>
<comment type="interaction">
    <interactant intactId="EBI-3862428">
        <id>P09693</id>
    </interactant>
    <interactant intactId="EBI-17180389">
        <id>E9PQX1</id>
        <label>TMEM262</label>
    </interactant>
    <organismsDiffer>false</organismsDiffer>
    <experiments>3</experiments>
</comment>
<comment type="interaction">
    <interactant intactId="EBI-3862428">
        <id>P09693</id>
    </interactant>
    <interactant intactId="EBI-3922833">
        <id>Q969K7</id>
        <label>TMEM54</label>
    </interactant>
    <organismsDiffer>false</organismsDiffer>
    <experiments>3</experiments>
</comment>
<comment type="subcellular location">
    <subcellularLocation>
        <location evidence="12">Cell membrane</location>
        <topology>Single-pass type I membrane protein</topology>
    </subcellularLocation>
</comment>
<comment type="domain">
    <text>A di-leucine motif and a tyrosine-based motif are individually sufficient to induce both endocytosis and delivery to lysosomes.</text>
</comment>
<comment type="PTM">
    <text evidence="8 11">Phosphorylated on Tyr residues after T-cell receptor triggering by LCK in association with CD4/CD8 (PubMed:2470098). Phosphorylated also by PKC; leading to the TCR complex down-regulation (PubMed:8187769).</text>
</comment>
<comment type="PTM">
    <text evidence="1">Phosphorylated on Tyr residues after T-cell receptor triggering by LCK in association with CD4/CD8.</text>
</comment>
<comment type="disease" evidence="6 7">
    <disease id="DI-04033">
        <name>Immunodeficiency 17</name>
        <acronym>IMD17</acronym>
        <description>An autosomal recessive primary immunodeficiency characterized by highly variable clinical severity. Some patients have onset of severe recurrent infections in early infancy that may be lethal, whereas others may be only mildly affected or essentially asymptomatic into young adulthood. More severely affected patients may have evidence of autoimmune disease or enteropathy. The immunologic pattern is similar among patients, showing partial T-cell lymphopenia, decreased amounts of the CD3 complex, and impaired proliferative responses to T-cell receptor dependent stimuli. The phenotype in some patients is reminiscent of severe combined immunodeficiency.</description>
        <dbReference type="MIM" id="615607"/>
    </disease>
    <text>The disease is caused by variants affecting the gene represented in this entry.</text>
</comment>
<comment type="online information" name="CD3Gbase">
    <link uri="https://databases.lovd.nl/shared/genes/CD3G"/>
    <text>CD3G mutation db</text>
</comment>
<comment type="online information" name="Wikipedia">
    <link uri="https://en.wikipedia.org/wiki/CD3_receptor"/>
    <text>CD3 receptor entry</text>
</comment>
<reference key="1">
    <citation type="journal article" date="1986" name="EMBO J.">
        <title>Primary structure of the T3 gamma subunit of the T3/T cell antigen receptor complex deduced from cDNA sequences: evolution of the T3 gamma and delta subunits.</title>
        <authorList>
            <person name="Krissansen G.W."/>
            <person name="Owen M.J."/>
            <person name="Verbi W."/>
            <person name="Crumpton M.J."/>
        </authorList>
    </citation>
    <scope>NUCLEOTIDE SEQUENCE [MRNA]</scope>
</reference>
<reference key="2">
    <citation type="journal article" date="1987" name="EMBO J.">
        <title>Physical linkage of three CD3 genes on human chromosome 11.</title>
        <authorList>
            <person name="Tunnacliffe A."/>
            <person name="Buluwela L."/>
            <person name="Rabbitts T.H."/>
        </authorList>
    </citation>
    <scope>NUCLEOTIDE SEQUENCE [GENOMIC DNA]</scope>
</reference>
<reference key="3">
    <citation type="journal article" date="2004" name="Genome Res.">
        <title>The status, quality, and expansion of the NIH full-length cDNA project: the Mammalian Gene Collection (MGC).</title>
        <authorList>
            <consortium name="The MGC Project Team"/>
        </authorList>
    </citation>
    <scope>NUCLEOTIDE SEQUENCE [LARGE SCALE MRNA]</scope>
</reference>
<reference key="4">
    <citation type="journal article" date="1989" name="Eur. J. Biochem.">
        <title>Dephosphorylation of the human T lymphocyte CD3 antigen.</title>
        <authorList>
            <person name="Alexander D."/>
            <person name="Goris J."/>
            <person name="Marais R."/>
            <person name="Rothbard J."/>
            <person name="Merlevede W."/>
            <person name="Crumpton M.J."/>
        </authorList>
    </citation>
    <scope>PROTEIN SEQUENCE OF 139-182</scope>
    <scope>PHOSPHORYLATION AT SER-145 AND SER-148</scope>
</reference>
<reference key="5">
    <citation type="journal article" date="1987" name="J. Biol. Chem.">
        <title>The human T3 gamma chain is phosphorylated at serine 126 in response to T lymphocyte activation.</title>
        <authorList>
            <person name="Davies A.A."/>
            <person name="Cantrell D.A."/>
            <person name="Hexham J.M."/>
            <person name="Parker P.J."/>
            <person name="Rothbard J."/>
            <person name="Crumpton M.J."/>
        </authorList>
    </citation>
    <scope>PHOSPHORYLATION AT SER-145 AND SER-148</scope>
</reference>
<reference key="6">
    <citation type="journal article" date="1989" name="Proc. Natl. Acad. Sci. U.S.A.">
        <title>The CD4 and CD8 antigens are coupled to a protein-tyrosine kinase (p56lck) that phosphorylates the CD3 complex.</title>
        <authorList>
            <person name="Barber E.K."/>
            <person name="Dasgupta J.D."/>
            <person name="Schlossman S.F."/>
            <person name="Trevillyan J.M."/>
            <person name="Rudd C.E."/>
        </authorList>
    </citation>
    <scope>FUNCTION</scope>
    <scope>PHOSPHORYLATION BY LCK</scope>
</reference>
<reference key="7">
    <citation type="journal article" date="1992" name="Cell">
        <title>A novel di-leucine motif and a tyrosine-based motif independently mediate lysosomal targeting and endocytosis of CD3 chains.</title>
        <authorList>
            <person name="Letourneur F."/>
            <person name="Klausner R.D."/>
        </authorList>
    </citation>
    <scope>MUTAGENESIS OF LEU-153; LEU-154; TYR-160 AND LEU-163</scope>
</reference>
<reference key="8">
    <citation type="journal article" date="1992" name="N. Engl. J. Med.">
        <title>Brief report: primary immunodeficiency caused by mutations in the gene encoding the CD3-gamma subunit of the T-lymphocyte receptor.</title>
        <authorList>
            <person name="Arnaiz-Villena A."/>
            <person name="Timon M."/>
            <person name="Corell A."/>
            <person name="Perez-Aciego P."/>
            <person name="Martin-Villa J.M."/>
            <person name="Regueiro J.R."/>
        </authorList>
    </citation>
    <scope>INVOLVEMENT IN IMD17</scope>
</reference>
<reference key="9">
    <citation type="journal article" date="1994" name="EMBO J.">
        <title>CD3 gamma contains a phosphoserine-dependent di-leucine motif involved in down-regulation of the T cell receptor.</title>
        <authorList>
            <person name="Dietrich J."/>
            <person name="Hou X."/>
            <person name="Wegener A.M."/>
            <person name="Geisler C."/>
        </authorList>
    </citation>
    <scope>FUNCTION</scope>
    <scope>PHOSPHORYLATION AT SER-148</scope>
    <scope>MUTAGENESIS OF LEU-153 AND LEU-154</scope>
</reference>
<reference key="10">
    <citation type="journal article" date="1996" name="J. Cell Biol.">
        <title>Role of CD3 gamma in T cell receptor assembly.</title>
        <authorList>
            <person name="Dietrich J."/>
            <person name="Neisig A."/>
            <person name="Hou X."/>
            <person name="Wegener A.M."/>
            <person name="Gajhede M."/>
            <person name="Geisler C."/>
        </authorList>
    </citation>
    <scope>FUNCTION</scope>
    <scope>SUBCELLULAR LOCATION</scope>
    <scope>GLYCOSYLATION AT ASN-52 AND ASN-92</scope>
</reference>
<reference key="11">
    <citation type="journal article" date="2004" name="Crit. Rev. Immunol.">
        <title>TCR trafficking in resting and stimulated T cells.</title>
        <authorList>
            <person name="Geisler C."/>
        </authorList>
    </citation>
    <scope>REVIEW ON FUNCTION</scope>
</reference>
<reference key="12">
    <citation type="journal article" date="2007" name="J. Immunol.">
        <title>Differential biological role of CD3 chains revealed by human immunodeficiencies.</title>
        <authorList>
            <person name="Recio M.J."/>
            <person name="Moreno-Pelayo M.A."/>
            <person name="Kilic S.S."/>
            <person name="Guardo A.C."/>
            <person name="Sanal O."/>
            <person name="Allende L.M."/>
            <person name="Perez-Flores V."/>
            <person name="Mencia A."/>
            <person name="Modamio-Hoeybjoer S."/>
            <person name="Seoane E."/>
            <person name="Regueiro J.R."/>
        </authorList>
    </citation>
    <scope>INVOLVEMENT IN IMD17</scope>
</reference>
<reference key="13">
    <citation type="journal article" date="2009" name="Sci. Signal.">
        <title>Quantitative phosphoproteomic analysis of T cell receptor signaling reveals system-wide modulation of protein-protein interactions.</title>
        <authorList>
            <person name="Mayya V."/>
            <person name="Lundgren D.H."/>
            <person name="Hwang S.-I."/>
            <person name="Rezaul K."/>
            <person name="Wu L."/>
            <person name="Eng J.K."/>
            <person name="Rodionov V."/>
            <person name="Han D.K."/>
        </authorList>
    </citation>
    <scope>IDENTIFICATION BY MASS SPECTROMETRY [LARGE SCALE ANALYSIS]</scope>
    <source>
        <tissue>Leukemic T-cell</tissue>
    </source>
</reference>
<reference key="14">
    <citation type="journal article" date="2004" name="Proc. Natl. Acad. Sci. U.S.A.">
        <title>Crystal structure of the human T cell receptor CD3 epsilon gamma heterodimer complexed to the therapeutic mAb OKT3.</title>
        <authorList>
            <person name="Kjer-Nielsen L."/>
            <person name="Dunstone M.A."/>
            <person name="Kostenko L."/>
            <person name="Ely L.K."/>
            <person name="Beddoe T."/>
            <person name="Mifsud N.A."/>
            <person name="Purcell A.W."/>
            <person name="Brooks A.G."/>
            <person name="McCluskey J."/>
            <person name="Rossjohn J."/>
        </authorList>
    </citation>
    <scope>X-RAY CRYSTALLOGRAPHY (2.1 ANGSTROMS) OF 23-103 IN COMPLEX WITH CD3E AND ANTIBODY</scope>
    <scope>SUBUNIT</scope>
    <scope>DISULFIDE BOND</scope>
</reference>
<dbReference type="EMBL" id="X04145">
    <property type="protein sequence ID" value="CAA27764.1"/>
    <property type="molecule type" value="mRNA"/>
</dbReference>
<dbReference type="EMBL" id="X06026">
    <property type="protein sequence ID" value="CAA29428.1"/>
    <property type="molecule type" value="Genomic_DNA"/>
</dbReference>
<dbReference type="EMBL" id="X06027">
    <property type="protein sequence ID" value="CAA29428.1"/>
    <property type="status" value="JOINED"/>
    <property type="molecule type" value="Genomic_DNA"/>
</dbReference>
<dbReference type="EMBL" id="X06028">
    <property type="protein sequence ID" value="CAA29428.1"/>
    <property type="status" value="JOINED"/>
    <property type="molecule type" value="Genomic_DNA"/>
</dbReference>
<dbReference type="EMBL" id="X06029">
    <property type="protein sequence ID" value="CAA29428.1"/>
    <property type="status" value="JOINED"/>
    <property type="molecule type" value="Genomic_DNA"/>
</dbReference>
<dbReference type="EMBL" id="X06030">
    <property type="protein sequence ID" value="CAA29428.1"/>
    <property type="status" value="JOINED"/>
    <property type="molecule type" value="Genomic_DNA"/>
</dbReference>
<dbReference type="EMBL" id="X06031">
    <property type="protein sequence ID" value="CAA29428.1"/>
    <property type="status" value="JOINED"/>
    <property type="molecule type" value="Genomic_DNA"/>
</dbReference>
<dbReference type="EMBL" id="BC113830">
    <property type="protein sequence ID" value="AAI13831.1"/>
    <property type="molecule type" value="mRNA"/>
</dbReference>
<dbReference type="CCDS" id="CCDS8395.1"/>
<dbReference type="PIR" id="A25468">
    <property type="entry name" value="A25468"/>
</dbReference>
<dbReference type="RefSeq" id="NP_000064.1">
    <property type="nucleotide sequence ID" value="NM_000073.3"/>
</dbReference>
<dbReference type="RefSeq" id="XP_006719004.1">
    <property type="nucleotide sequence ID" value="XM_006718941.4"/>
</dbReference>
<dbReference type="RefSeq" id="XP_054226470.1">
    <property type="nucleotide sequence ID" value="XM_054370495.1"/>
</dbReference>
<dbReference type="PDB" id="1SY6">
    <property type="method" value="X-ray"/>
    <property type="resolution" value="2.10 A"/>
    <property type="chains" value="A=23-103"/>
</dbReference>
<dbReference type="PDB" id="6JXR">
    <property type="method" value="EM"/>
    <property type="resolution" value="3.70 A"/>
    <property type="chains" value="g=1-182"/>
</dbReference>
<dbReference type="PDB" id="7FJD">
    <property type="method" value="EM"/>
    <property type="resolution" value="3.20 A"/>
    <property type="chains" value="g=1-182"/>
</dbReference>
<dbReference type="PDB" id="7FJE">
    <property type="method" value="EM"/>
    <property type="resolution" value="3.00 A"/>
    <property type="chains" value="g=1-182"/>
</dbReference>
<dbReference type="PDB" id="7FJF">
    <property type="method" value="EM"/>
    <property type="resolution" value="3.10 A"/>
    <property type="chains" value="g=1-182"/>
</dbReference>
<dbReference type="PDB" id="7PHR">
    <property type="method" value="EM"/>
    <property type="resolution" value="3.08 A"/>
    <property type="chains" value="C=23-144"/>
</dbReference>
<dbReference type="PDB" id="7Q5U">
    <property type="method" value="X-ray"/>
    <property type="resolution" value="2.40 A"/>
    <property type="chains" value="GGG/HHH/III/JJJ/KKK/LLL=157-176"/>
</dbReference>
<dbReference type="PDB" id="8ES7">
    <property type="method" value="EM"/>
    <property type="resolution" value="3.04 A"/>
    <property type="chains" value="G=1-182"/>
</dbReference>
<dbReference type="PDB" id="8ES8">
    <property type="method" value="EM"/>
    <property type="resolution" value="2.65 A"/>
    <property type="chains" value="G=1-182"/>
</dbReference>
<dbReference type="PDB" id="8ES9">
    <property type="method" value="EM"/>
    <property type="resolution" value="3.25 A"/>
    <property type="chains" value="G=1-182"/>
</dbReference>
<dbReference type="PDB" id="8JC0">
    <property type="method" value="EM"/>
    <property type="resolution" value="3.40 A"/>
    <property type="chains" value="g=1-182"/>
</dbReference>
<dbReference type="PDB" id="8JCB">
    <property type="method" value="EM"/>
    <property type="resolution" value="9.50 A"/>
    <property type="chains" value="G/g=1-182"/>
</dbReference>
<dbReference type="PDB" id="8TW4">
    <property type="method" value="EM"/>
    <property type="resolution" value="3.30 A"/>
    <property type="chains" value="G=1-182"/>
</dbReference>
<dbReference type="PDB" id="8TW6">
    <property type="method" value="EM"/>
    <property type="resolution" value="3.10 A"/>
    <property type="chains" value="G=1-182"/>
</dbReference>
<dbReference type="PDB" id="8WXE">
    <property type="method" value="EM"/>
    <property type="resolution" value="4.00 A"/>
    <property type="chains" value="g=1-182"/>
</dbReference>
<dbReference type="PDB" id="8WY0">
    <property type="method" value="EM"/>
    <property type="resolution" value="3.80 A"/>
    <property type="chains" value="g=1-182"/>
</dbReference>
<dbReference type="PDB" id="8WYI">
    <property type="method" value="EM"/>
    <property type="resolution" value="3.90 A"/>
    <property type="chains" value="g=1-182"/>
</dbReference>
<dbReference type="PDB" id="8YC0">
    <property type="method" value="EM"/>
    <property type="resolution" value="4.12 A"/>
    <property type="chains" value="g=1-182"/>
</dbReference>
<dbReference type="PDB" id="9BBC">
    <property type="method" value="EM"/>
    <property type="resolution" value="3.30 A"/>
    <property type="chains" value="G=1-137"/>
</dbReference>
<dbReference type="PDB" id="9C3E">
    <property type="method" value="EM"/>
    <property type="resolution" value="3.50 A"/>
    <property type="chains" value="G=1-182"/>
</dbReference>
<dbReference type="PDB" id="9CI8">
    <property type="method" value="EM"/>
    <property type="resolution" value="3.01 A"/>
    <property type="chains" value="g=24-138"/>
</dbReference>
<dbReference type="PDB" id="9CIA">
    <property type="method" value="EM"/>
    <property type="resolution" value="3.39 A"/>
    <property type="chains" value="g=25-138"/>
</dbReference>
<dbReference type="PDB" id="9CQ4">
    <property type="method" value="EM"/>
    <property type="resolution" value="3.27 A"/>
    <property type="chains" value="G=1-182"/>
</dbReference>
<dbReference type="PDBsum" id="1SY6"/>
<dbReference type="PDBsum" id="6JXR"/>
<dbReference type="PDBsum" id="7FJD"/>
<dbReference type="PDBsum" id="7FJE"/>
<dbReference type="PDBsum" id="7FJF"/>
<dbReference type="PDBsum" id="7PHR"/>
<dbReference type="PDBsum" id="7Q5U"/>
<dbReference type="PDBsum" id="8ES7"/>
<dbReference type="PDBsum" id="8ES8"/>
<dbReference type="PDBsum" id="8ES9"/>
<dbReference type="PDBsum" id="8JC0"/>
<dbReference type="PDBsum" id="8JCB"/>
<dbReference type="PDBsum" id="8TW4"/>
<dbReference type="PDBsum" id="8TW6"/>
<dbReference type="PDBsum" id="8WXE"/>
<dbReference type="PDBsum" id="8WY0"/>
<dbReference type="PDBsum" id="8WYI"/>
<dbReference type="PDBsum" id="8YC0"/>
<dbReference type="PDBsum" id="9BBC"/>
<dbReference type="PDBsum" id="9C3E"/>
<dbReference type="PDBsum" id="9CI8"/>
<dbReference type="PDBsum" id="9CIA"/>
<dbReference type="PDBsum" id="9CQ4"/>
<dbReference type="BMRB" id="P09693"/>
<dbReference type="EMDB" id="EMD-13427"/>
<dbReference type="EMDB" id="EMD-28570"/>
<dbReference type="EMDB" id="EMD-28571"/>
<dbReference type="EMDB" id="EMD-28572"/>
<dbReference type="EMDB" id="EMD-31618"/>
<dbReference type="EMDB" id="EMD-31619"/>
<dbReference type="EMDB" id="EMD-31620"/>
<dbReference type="EMDB" id="EMD-36149"/>
<dbReference type="EMDB" id="EMD-36156"/>
<dbReference type="EMDB" id="EMD-37904"/>
<dbReference type="EMDB" id="EMD-37914"/>
<dbReference type="EMDB" id="EMD-37929"/>
<dbReference type="EMDB" id="EMD-39128"/>
<dbReference type="EMDB" id="EMD-41658"/>
<dbReference type="EMDB" id="EMD-41660"/>
<dbReference type="EMDB" id="EMD-44417"/>
<dbReference type="EMDB" id="EMD-45166"/>
<dbReference type="EMDB" id="EMD-45614"/>
<dbReference type="EMDB" id="EMD-45615"/>
<dbReference type="EMDB" id="EMD-45808"/>
<dbReference type="EMDB" id="EMD-9895"/>
<dbReference type="SASBDB" id="P09693"/>
<dbReference type="SMR" id="P09693"/>
<dbReference type="BioGRID" id="107355">
    <property type="interactions" value="19"/>
</dbReference>
<dbReference type="ComplexPortal" id="CPX-6482">
    <property type="entry name" value="Alpha-beta T cell receptor complex, TRBC2 variant"/>
</dbReference>
<dbReference type="ComplexPortal" id="CPX-6581">
    <property type="entry name" value="Alpha-beta T cell receptor complex, TRBC1 variant"/>
</dbReference>
<dbReference type="ComplexPortal" id="CPX-6582">
    <property type="entry name" value="Gamma-delta T cell receptor complex, TRGC1 variant"/>
</dbReference>
<dbReference type="ComplexPortal" id="CPX-6603">
    <property type="entry name" value="Gamma-delta T cell receptor complex, TRGC2 variant"/>
</dbReference>
<dbReference type="CORUM" id="P09693"/>
<dbReference type="ELM" id="P09693"/>
<dbReference type="FunCoup" id="P09693">
    <property type="interactions" value="240"/>
</dbReference>
<dbReference type="IntAct" id="P09693">
    <property type="interactions" value="13"/>
</dbReference>
<dbReference type="STRING" id="9606.ENSP00000431445"/>
<dbReference type="ChEMBL" id="CHEMBL2364168"/>
<dbReference type="DrugBank" id="DB15395">
    <property type="generic name" value="Elranatamab"/>
</dbReference>
<dbReference type="DrugBank" id="DB16371">
    <property type="generic name" value="Glofitamab"/>
</dbReference>
<dbReference type="DrugBank" id="DB00075">
    <property type="generic name" value="Muromonab"/>
</dbReference>
<dbReference type="DrugBank" id="DB16684">
    <property type="generic name" value="Odronextamab"/>
</dbReference>
<dbReference type="DrugBank" id="DB16678">
    <property type="generic name" value="Talquetamab"/>
</dbReference>
<dbReference type="DrugBank" id="DB17256">
    <property type="generic name" value="Tarlatamab"/>
</dbReference>
<dbReference type="DrugBank" id="DB16655">
    <property type="generic name" value="Teclistamab"/>
</dbReference>
<dbReference type="DrugCentral" id="P09693"/>
<dbReference type="GlyCosmos" id="P09693">
    <property type="glycosylation" value="2 sites, No reported glycans"/>
</dbReference>
<dbReference type="GlyGen" id="P09693">
    <property type="glycosylation" value="2 sites"/>
</dbReference>
<dbReference type="iPTMnet" id="P09693"/>
<dbReference type="PhosphoSitePlus" id="P09693"/>
<dbReference type="BioMuta" id="CD3G"/>
<dbReference type="DMDM" id="115993"/>
<dbReference type="MassIVE" id="P09693"/>
<dbReference type="PaxDb" id="9606-ENSP00000431445"/>
<dbReference type="PeptideAtlas" id="P09693"/>
<dbReference type="ProteomicsDB" id="52266"/>
<dbReference type="ABCD" id="P09693">
    <property type="antibodies" value="1 sequenced antibody"/>
</dbReference>
<dbReference type="Antibodypedia" id="4306">
    <property type="antibodies" value="377 antibodies from 42 providers"/>
</dbReference>
<dbReference type="DNASU" id="917"/>
<dbReference type="Ensembl" id="ENST00000532917.3">
    <property type="protein sequence ID" value="ENSP00000431445.2"/>
    <property type="gene ID" value="ENSG00000160654.11"/>
</dbReference>
<dbReference type="GeneID" id="917"/>
<dbReference type="KEGG" id="hsa:917"/>
<dbReference type="MANE-Select" id="ENST00000532917.3">
    <property type="protein sequence ID" value="ENSP00000431445.2"/>
    <property type="RefSeq nucleotide sequence ID" value="NM_000073.3"/>
    <property type="RefSeq protein sequence ID" value="NP_000064.1"/>
</dbReference>
<dbReference type="UCSC" id="uc001psu.3">
    <property type="organism name" value="human"/>
</dbReference>
<dbReference type="AGR" id="HGNC:1675"/>
<dbReference type="CTD" id="917"/>
<dbReference type="DisGeNET" id="917"/>
<dbReference type="GeneCards" id="CD3G"/>
<dbReference type="HGNC" id="HGNC:1675">
    <property type="gene designation" value="CD3G"/>
</dbReference>
<dbReference type="HPA" id="ENSG00000160654">
    <property type="expression patterns" value="Tissue enriched (lymphoid)"/>
</dbReference>
<dbReference type="MalaCards" id="CD3G"/>
<dbReference type="MIM" id="186740">
    <property type="type" value="gene"/>
</dbReference>
<dbReference type="MIM" id="615607">
    <property type="type" value="phenotype"/>
</dbReference>
<dbReference type="neXtProt" id="NX_P09693"/>
<dbReference type="OpenTargets" id="ENSG00000160654"/>
<dbReference type="Orphanet" id="169082">
    <property type="disease" value="Combined immunodeficiency due to CD3gamma deficiency"/>
</dbReference>
<dbReference type="PharmGKB" id="PA26217"/>
<dbReference type="VEuPathDB" id="HostDB:ENSG00000160654"/>
<dbReference type="eggNOG" id="ENOG502S4XC">
    <property type="taxonomic scope" value="Eukaryota"/>
</dbReference>
<dbReference type="GeneTree" id="ENSGT00940000153312"/>
<dbReference type="HOGENOM" id="CLU_115449_0_0_1"/>
<dbReference type="InParanoid" id="P09693"/>
<dbReference type="OMA" id="QYGHLQG"/>
<dbReference type="OrthoDB" id="8941324at2759"/>
<dbReference type="PAN-GO" id="P09693">
    <property type="GO annotations" value="5 GO annotations based on evolutionary models"/>
</dbReference>
<dbReference type="PhylomeDB" id="P09693"/>
<dbReference type="TreeFam" id="TF335892"/>
<dbReference type="PathwayCommons" id="P09693"/>
<dbReference type="Reactome" id="R-HSA-198933">
    <property type="pathway name" value="Immunoregulatory interactions between a Lymphoid and a non-Lymphoid cell"/>
</dbReference>
<dbReference type="Reactome" id="R-HSA-202424">
    <property type="pathway name" value="Downstream TCR signaling"/>
</dbReference>
<dbReference type="Reactome" id="R-HSA-202427">
    <property type="pathway name" value="Phosphorylation of CD3 and TCR zeta chains"/>
</dbReference>
<dbReference type="Reactome" id="R-HSA-202430">
    <property type="pathway name" value="Translocation of ZAP-70 to Immunological synapse"/>
</dbReference>
<dbReference type="Reactome" id="R-HSA-202433">
    <property type="pathway name" value="Generation of second messenger molecules"/>
</dbReference>
<dbReference type="Reactome" id="R-HSA-2029481">
    <property type="pathway name" value="FCGR activation"/>
</dbReference>
<dbReference type="Reactome" id="R-HSA-2029482">
    <property type="pathway name" value="Regulation of actin dynamics for phagocytic cup formation"/>
</dbReference>
<dbReference type="Reactome" id="R-HSA-2029485">
    <property type="pathway name" value="Role of phospholipids in phagocytosis"/>
</dbReference>
<dbReference type="Reactome" id="R-HSA-389948">
    <property type="pathway name" value="Co-inhibition by PD-1"/>
</dbReference>
<dbReference type="Reactome" id="R-HSA-8856825">
    <property type="pathway name" value="Cargo recognition for clathrin-mediated endocytosis"/>
</dbReference>
<dbReference type="Reactome" id="R-HSA-8856828">
    <property type="pathway name" value="Clathrin-mediated endocytosis"/>
</dbReference>
<dbReference type="Reactome" id="R-HSA-9664323">
    <property type="pathway name" value="FCGR3A-mediated IL10 synthesis"/>
</dbReference>
<dbReference type="Reactome" id="R-HSA-9664422">
    <property type="pathway name" value="FCGR3A-mediated phagocytosis"/>
</dbReference>
<dbReference type="SignaLink" id="P09693"/>
<dbReference type="SIGNOR" id="P09693"/>
<dbReference type="BioGRID-ORCS" id="917">
    <property type="hits" value="18 hits in 1162 CRISPR screens"/>
</dbReference>
<dbReference type="ChiTaRS" id="CD3G">
    <property type="organism name" value="human"/>
</dbReference>
<dbReference type="GeneWiki" id="CD3G"/>
<dbReference type="GenomeRNAi" id="917"/>
<dbReference type="Pharos" id="P09693">
    <property type="development level" value="Tclin"/>
</dbReference>
<dbReference type="PRO" id="PR:P09693"/>
<dbReference type="Proteomes" id="UP000005640">
    <property type="component" value="Chromosome 11"/>
</dbReference>
<dbReference type="RNAct" id="P09693">
    <property type="molecule type" value="protein"/>
</dbReference>
<dbReference type="Bgee" id="ENSG00000160654">
    <property type="expression patterns" value="Expressed in buccal mucosa cell and 117 other cell types or tissues"/>
</dbReference>
<dbReference type="ExpressionAtlas" id="P09693">
    <property type="expression patterns" value="baseline and differential"/>
</dbReference>
<dbReference type="GO" id="GO:0042105">
    <property type="term" value="C:alpha-beta T cell receptor complex"/>
    <property type="evidence" value="ECO:0000314"/>
    <property type="project" value="UniProtKB"/>
</dbReference>
<dbReference type="GO" id="GO:0030669">
    <property type="term" value="C:clathrin-coated endocytic vesicle membrane"/>
    <property type="evidence" value="ECO:0000304"/>
    <property type="project" value="Reactome"/>
</dbReference>
<dbReference type="GO" id="GO:0005829">
    <property type="term" value="C:cytosol"/>
    <property type="evidence" value="ECO:0000314"/>
    <property type="project" value="HPA"/>
</dbReference>
<dbReference type="GO" id="GO:0009897">
    <property type="term" value="C:external side of plasma membrane"/>
    <property type="evidence" value="ECO:0000318"/>
    <property type="project" value="GO_Central"/>
</dbReference>
<dbReference type="GO" id="GO:0042106">
    <property type="term" value="C:gamma-delta T cell receptor complex"/>
    <property type="evidence" value="ECO:0000303"/>
    <property type="project" value="ComplexPortal"/>
</dbReference>
<dbReference type="GO" id="GO:0005886">
    <property type="term" value="C:plasma membrane"/>
    <property type="evidence" value="ECO:0000314"/>
    <property type="project" value="HPA"/>
</dbReference>
<dbReference type="GO" id="GO:0042802">
    <property type="term" value="F:identical protein binding"/>
    <property type="evidence" value="ECO:0000314"/>
    <property type="project" value="CAFA"/>
</dbReference>
<dbReference type="GO" id="GO:0030159">
    <property type="term" value="F:signaling receptor complex adaptor activity"/>
    <property type="evidence" value="ECO:0000303"/>
    <property type="project" value="UniProtKB"/>
</dbReference>
<dbReference type="GO" id="GO:0042608">
    <property type="term" value="F:T cell receptor binding"/>
    <property type="evidence" value="ECO:0000303"/>
    <property type="project" value="UniProtKB"/>
</dbReference>
<dbReference type="GO" id="GO:0004888">
    <property type="term" value="F:transmembrane signaling receptor activity"/>
    <property type="evidence" value="ECO:0000315"/>
    <property type="project" value="UniProtKB"/>
</dbReference>
<dbReference type="GO" id="GO:0002250">
    <property type="term" value="P:adaptive immune response"/>
    <property type="evidence" value="ECO:0000303"/>
    <property type="project" value="ComplexPortal"/>
</dbReference>
<dbReference type="GO" id="GO:0046631">
    <property type="term" value="P:alpha-beta T cell activation"/>
    <property type="evidence" value="ECO:0000303"/>
    <property type="project" value="ComplexPortal"/>
</dbReference>
<dbReference type="GO" id="GO:0007166">
    <property type="term" value="P:cell surface receptor signaling pathway"/>
    <property type="evidence" value="ECO:0000315"/>
    <property type="project" value="UniProtKB"/>
</dbReference>
<dbReference type="GO" id="GO:0007163">
    <property type="term" value="P:establishment or maintenance of cell polarity"/>
    <property type="evidence" value="ECO:0000315"/>
    <property type="project" value="UniProtKB"/>
</dbReference>
<dbReference type="GO" id="GO:0046629">
    <property type="term" value="P:gamma-delta T cell activation"/>
    <property type="evidence" value="ECO:0000303"/>
    <property type="project" value="ComplexPortal"/>
</dbReference>
<dbReference type="GO" id="GO:0045059">
    <property type="term" value="P:positive thymic T cell selection"/>
    <property type="evidence" value="ECO:0000318"/>
    <property type="project" value="GO_Central"/>
</dbReference>
<dbReference type="GO" id="GO:0015031">
    <property type="term" value="P:protein transport"/>
    <property type="evidence" value="ECO:0000315"/>
    <property type="project" value="UniProtKB"/>
</dbReference>
<dbReference type="GO" id="GO:0065003">
    <property type="term" value="P:protein-containing complex assembly"/>
    <property type="evidence" value="ECO:0000303"/>
    <property type="project" value="UniProtKB"/>
</dbReference>
<dbReference type="GO" id="GO:0070228">
    <property type="term" value="P:regulation of lymphocyte apoptotic process"/>
    <property type="evidence" value="ECO:0000315"/>
    <property type="project" value="UniProtKB"/>
</dbReference>
<dbReference type="GO" id="GO:0042110">
    <property type="term" value="P:T cell activation"/>
    <property type="evidence" value="ECO:0000303"/>
    <property type="project" value="UniProtKB"/>
</dbReference>
<dbReference type="GO" id="GO:0050852">
    <property type="term" value="P:T cell receptor signaling pathway"/>
    <property type="evidence" value="ECO:0000303"/>
    <property type="project" value="ComplexPortal"/>
</dbReference>
<dbReference type="CDD" id="cd07691">
    <property type="entry name" value="IgC1_CD3_gamma_delta"/>
    <property type="match status" value="1"/>
</dbReference>
<dbReference type="FunFam" id="2.60.40.10:FF:001337">
    <property type="entry name" value="T-cell surface glycoprotein CD3 gamma chain"/>
    <property type="match status" value="1"/>
</dbReference>
<dbReference type="Gene3D" id="2.60.40.10">
    <property type="entry name" value="Immunoglobulins"/>
    <property type="match status" value="1"/>
</dbReference>
<dbReference type="InterPro" id="IPR015484">
    <property type="entry name" value="CD3_esu/gsu/dsu"/>
</dbReference>
<dbReference type="InterPro" id="IPR036179">
    <property type="entry name" value="Ig-like_dom_sf"/>
</dbReference>
<dbReference type="InterPro" id="IPR013783">
    <property type="entry name" value="Ig-like_fold"/>
</dbReference>
<dbReference type="InterPro" id="IPR032052">
    <property type="entry name" value="Ig_4"/>
</dbReference>
<dbReference type="InterPro" id="IPR003598">
    <property type="entry name" value="Ig_sub2"/>
</dbReference>
<dbReference type="InterPro" id="IPR003110">
    <property type="entry name" value="Phos_immunorcpt_sig_ITAM"/>
</dbReference>
<dbReference type="PANTHER" id="PTHR10570:SF8">
    <property type="entry name" value="T-CELL SURFACE GLYCOPROTEIN CD3 GAMMA CHAIN"/>
    <property type="match status" value="1"/>
</dbReference>
<dbReference type="PANTHER" id="PTHR10570">
    <property type="entry name" value="T-CELL SURFACE GLYCOPROTEIN CD3 GAMMA CHAIN / DELTA CHAIN"/>
    <property type="match status" value="1"/>
</dbReference>
<dbReference type="Pfam" id="PF16680">
    <property type="entry name" value="Ig_4"/>
    <property type="match status" value="1"/>
</dbReference>
<dbReference type="Pfam" id="PF02189">
    <property type="entry name" value="ITAM"/>
    <property type="match status" value="1"/>
</dbReference>
<dbReference type="SMART" id="SM00408">
    <property type="entry name" value="IGc2"/>
    <property type="match status" value="1"/>
</dbReference>
<dbReference type="SMART" id="SM00077">
    <property type="entry name" value="ITAM"/>
    <property type="match status" value="1"/>
</dbReference>
<dbReference type="SUPFAM" id="SSF48726">
    <property type="entry name" value="Immunoglobulin"/>
    <property type="match status" value="1"/>
</dbReference>
<dbReference type="PROSITE" id="PS51055">
    <property type="entry name" value="ITAM_1"/>
    <property type="match status" value="1"/>
</dbReference>
<organism>
    <name type="scientific">Homo sapiens</name>
    <name type="common">Human</name>
    <dbReference type="NCBI Taxonomy" id="9606"/>
    <lineage>
        <taxon>Eukaryota</taxon>
        <taxon>Metazoa</taxon>
        <taxon>Chordata</taxon>
        <taxon>Craniata</taxon>
        <taxon>Vertebrata</taxon>
        <taxon>Euteleostomi</taxon>
        <taxon>Mammalia</taxon>
        <taxon>Eutheria</taxon>
        <taxon>Euarchontoglires</taxon>
        <taxon>Primates</taxon>
        <taxon>Haplorrhini</taxon>
        <taxon>Catarrhini</taxon>
        <taxon>Hominidae</taxon>
        <taxon>Homo</taxon>
    </lineage>
</organism>
<gene>
    <name type="primary">CD3G</name>
    <name type="synonym">T3G</name>
</gene>
<evidence type="ECO:0000250" key="1">
    <source>
        <dbReference type="UniProtKB" id="P04234"/>
    </source>
</evidence>
<evidence type="ECO:0000255" key="2"/>
<evidence type="ECO:0000255" key="3">
    <source>
        <dbReference type="PROSITE-ProRule" id="PRU00379"/>
    </source>
</evidence>
<evidence type="ECO:0000269" key="4">
    <source>
    </source>
</evidence>
<evidence type="ECO:0000269" key="5">
    <source>
    </source>
</evidence>
<evidence type="ECO:0000269" key="6">
    <source>
    </source>
</evidence>
<evidence type="ECO:0000269" key="7">
    <source>
    </source>
</evidence>
<evidence type="ECO:0000269" key="8">
    <source>
    </source>
</evidence>
<evidence type="ECO:0000269" key="9">
    <source>
    </source>
</evidence>
<evidence type="ECO:0000269" key="10">
    <source>
    </source>
</evidence>
<evidence type="ECO:0000269" key="11">
    <source>
    </source>
</evidence>
<evidence type="ECO:0000269" key="12">
    <source>
    </source>
</evidence>
<evidence type="ECO:0007829" key="13">
    <source>
        <dbReference type="PDB" id="1SY6"/>
    </source>
</evidence>
<evidence type="ECO:0007829" key="14">
    <source>
        <dbReference type="PDB" id="7FJE"/>
    </source>
</evidence>
<evidence type="ECO:0007829" key="15">
    <source>
        <dbReference type="PDB" id="8ES8"/>
    </source>
</evidence>
<proteinExistence type="evidence at protein level"/>
<accession>P09693</accession>
<accession>Q2HIZ6</accession>
<name>CD3G_HUMAN</name>
<keyword id="KW-0002">3D-structure</keyword>
<keyword id="KW-1064">Adaptive immunity</keyword>
<keyword id="KW-1003">Cell membrane</keyword>
<keyword id="KW-0903">Direct protein sequencing</keyword>
<keyword id="KW-1015">Disulfide bond</keyword>
<keyword id="KW-0325">Glycoprotein</keyword>
<keyword id="KW-0391">Immunity</keyword>
<keyword id="KW-0393">Immunoglobulin domain</keyword>
<keyword id="KW-0472">Membrane</keyword>
<keyword id="KW-0597">Phosphoprotein</keyword>
<keyword id="KW-1267">Proteomics identification</keyword>
<keyword id="KW-0675">Receptor</keyword>
<keyword id="KW-1185">Reference proteome</keyword>
<keyword id="KW-0732">Signal</keyword>
<keyword id="KW-0812">Transmembrane</keyword>
<keyword id="KW-1133">Transmembrane helix</keyword>
<protein>
    <recommendedName>
        <fullName>T-cell surface glycoprotein CD3 gamma chain</fullName>
    </recommendedName>
    <alternativeName>
        <fullName>T-cell receptor T3 gamma chain</fullName>
    </alternativeName>
    <cdAntigenName>CD3g</cdAntigenName>
</protein>
<feature type="signal peptide">
    <location>
        <begin position="1"/>
        <end position="22"/>
    </location>
</feature>
<feature type="chain" id="PRO_0000014615" description="T-cell surface glycoprotein CD3 gamma chain">
    <location>
        <begin position="23"/>
        <end position="182"/>
    </location>
</feature>
<feature type="topological domain" description="Extracellular" evidence="2">
    <location>
        <begin position="23"/>
        <end position="116"/>
    </location>
</feature>
<feature type="transmembrane region" description="Helical" evidence="2">
    <location>
        <begin position="117"/>
        <end position="137"/>
    </location>
</feature>
<feature type="topological domain" description="Cytoplasmic" evidence="2">
    <location>
        <begin position="138"/>
        <end position="182"/>
    </location>
</feature>
<feature type="domain" description="Ig-like">
    <location>
        <begin position="37"/>
        <end position="94"/>
    </location>
</feature>
<feature type="domain" description="ITAM" evidence="3">
    <location>
        <begin position="149"/>
        <end position="177"/>
    </location>
</feature>
<feature type="short sequence motif" description="Di-leucine motif" evidence="11">
    <location>
        <begin position="153"/>
        <end position="154"/>
    </location>
</feature>
<feature type="modified residue" description="Phosphoserine" evidence="9 10">
    <location>
        <position position="145"/>
    </location>
</feature>
<feature type="modified residue" description="Phosphoserine; by PKC" evidence="9 10 11">
    <location>
        <position position="148"/>
    </location>
</feature>
<feature type="glycosylation site" description="N-linked (GlcNAc...) asparagine" evidence="12">
    <location>
        <position position="52"/>
    </location>
</feature>
<feature type="glycosylation site" description="N-linked (GlcNAc...) asparagine" evidence="12">
    <location>
        <position position="92"/>
    </location>
</feature>
<feature type="disulfide bond" evidence="4">
    <location>
        <begin position="46"/>
        <end position="87"/>
    </location>
</feature>
<feature type="sequence variant" id="VAR_049854" description="In dbSNP:rs3753058.">
    <original>V</original>
    <variation>F</variation>
    <location>
        <position position="131"/>
    </location>
</feature>
<feature type="mutagenesis site" description="Abolishes lysosomal targeting." evidence="5 11">
    <original>L</original>
    <variation>A</variation>
    <location>
        <position position="153"/>
    </location>
</feature>
<feature type="mutagenesis site" description="Diminished but persistent lysosomal targeting." evidence="5">
    <original>L</original>
    <variation>I</variation>
    <location>
        <position position="153"/>
    </location>
</feature>
<feature type="mutagenesis site" description="Abolishes lysosomal targeting." evidence="11">
    <original>L</original>
    <variation>A</variation>
    <location>
        <position position="154"/>
    </location>
</feature>
<feature type="mutagenesis site" description="Diminished but persistent lysosomal targeting." evidence="5">
    <original>L</original>
    <variation>A</variation>
    <location>
        <position position="154"/>
    </location>
</feature>
<feature type="mutagenesis site" description="No effect." evidence="5">
    <original>L</original>
    <variation>I</variation>
    <location>
        <position position="154"/>
    </location>
</feature>
<feature type="mutagenesis site" description="Abolishes lysosomal targeting." evidence="5">
    <original>Y</original>
    <variation>A</variation>
    <location>
        <position position="160"/>
    </location>
</feature>
<feature type="mutagenesis site" description="Abolishes lysosomal targeting." evidence="5">
    <original>L</original>
    <variation>A</variation>
    <location>
        <position position="163"/>
    </location>
</feature>
<feature type="turn" evidence="13">
    <location>
        <begin position="26"/>
        <end position="28"/>
    </location>
</feature>
<feature type="strand" evidence="13">
    <location>
        <begin position="31"/>
        <end position="33"/>
    </location>
</feature>
<feature type="strand" evidence="13">
    <location>
        <begin position="38"/>
        <end position="46"/>
    </location>
</feature>
<feature type="strand" evidence="13">
    <location>
        <begin position="50"/>
        <end position="57"/>
    </location>
</feature>
<feature type="strand" evidence="13">
    <location>
        <begin position="60"/>
        <end position="68"/>
    </location>
</feature>
<feature type="strand" evidence="13">
    <location>
        <begin position="72"/>
        <end position="76"/>
    </location>
</feature>
<feature type="helix" evidence="13">
    <location>
        <begin position="77"/>
        <end position="79"/>
    </location>
</feature>
<feature type="strand" evidence="13">
    <location>
        <begin position="82"/>
        <end position="92"/>
    </location>
</feature>
<feature type="strand" evidence="13">
    <location>
        <begin position="97"/>
        <end position="102"/>
    </location>
</feature>
<feature type="strand" evidence="14">
    <location>
        <begin position="106"/>
        <end position="109"/>
    </location>
</feature>
<feature type="helix" evidence="15">
    <location>
        <begin position="112"/>
        <end position="135"/>
    </location>
</feature>